<keyword id="KW-1185">Reference proteome</keyword>
<keyword id="KW-0687">Ribonucleoprotein</keyword>
<keyword id="KW-0689">Ribosomal protein</keyword>
<sequence length="154" mass="16399">MAVSIRLARGGAKKRPYYRIVVADARSPRDGAFIEKIGAYNPLLAKDDPKRVVLDTDRAKHWLSVGAQPTDRVARFLDAAGVQERAARSNPKKAEPGEKAKERAEERAAKLAAAEEAANAPAEEPAAEPAAEEVTEVAAEAPAEEAAAEESTEA</sequence>
<name>RS16_RHIWR</name>
<organism>
    <name type="scientific">Rhizorhabdus wittichii (strain DSM 6014 / CCUG 31198 / JCM 15750 / NBRC 105917 / EY 4224 / RW1)</name>
    <name type="common">Sphingomonas wittichii</name>
    <dbReference type="NCBI Taxonomy" id="392499"/>
    <lineage>
        <taxon>Bacteria</taxon>
        <taxon>Pseudomonadati</taxon>
        <taxon>Pseudomonadota</taxon>
        <taxon>Alphaproteobacteria</taxon>
        <taxon>Sphingomonadales</taxon>
        <taxon>Sphingomonadaceae</taxon>
        <taxon>Rhizorhabdus</taxon>
    </lineage>
</organism>
<evidence type="ECO:0000255" key="1">
    <source>
        <dbReference type="HAMAP-Rule" id="MF_00385"/>
    </source>
</evidence>
<evidence type="ECO:0000256" key="2">
    <source>
        <dbReference type="SAM" id="MobiDB-lite"/>
    </source>
</evidence>
<evidence type="ECO:0000305" key="3"/>
<feature type="chain" id="PRO_1000049355" description="Small ribosomal subunit protein bS16">
    <location>
        <begin position="1"/>
        <end position="154"/>
    </location>
</feature>
<feature type="region of interest" description="Disordered" evidence="2">
    <location>
        <begin position="82"/>
        <end position="154"/>
    </location>
</feature>
<feature type="compositionally biased region" description="Basic and acidic residues" evidence="2">
    <location>
        <begin position="92"/>
        <end position="109"/>
    </location>
</feature>
<feature type="compositionally biased region" description="Low complexity" evidence="2">
    <location>
        <begin position="110"/>
        <end position="129"/>
    </location>
</feature>
<feature type="compositionally biased region" description="Acidic residues" evidence="2">
    <location>
        <begin position="142"/>
        <end position="154"/>
    </location>
</feature>
<reference key="1">
    <citation type="journal article" date="2010" name="J. Bacteriol.">
        <title>Genome sequence of the dioxin-mineralizing bacterium Sphingomonas wittichii RW1.</title>
        <authorList>
            <person name="Miller T.R."/>
            <person name="Delcher A.L."/>
            <person name="Salzberg S.L."/>
            <person name="Saunders E."/>
            <person name="Detter J.C."/>
            <person name="Halden R.U."/>
        </authorList>
    </citation>
    <scope>NUCLEOTIDE SEQUENCE [LARGE SCALE GENOMIC DNA]</scope>
    <source>
        <strain>DSM 6014 / CCUG 31198 / JCM 15750 / NBRC 105917 / EY 4224 / RW1</strain>
    </source>
</reference>
<accession>A5V9P7</accession>
<gene>
    <name evidence="1" type="primary">rpsP</name>
    <name type="ordered locus">Swit_2657</name>
</gene>
<dbReference type="EMBL" id="CP000699">
    <property type="protein sequence ID" value="ABQ69013.1"/>
    <property type="molecule type" value="Genomic_DNA"/>
</dbReference>
<dbReference type="SMR" id="A5V9P7"/>
<dbReference type="STRING" id="392499.Swit_2657"/>
<dbReference type="PaxDb" id="392499-Swit_2657"/>
<dbReference type="KEGG" id="swi:Swit_2657"/>
<dbReference type="eggNOG" id="COG0228">
    <property type="taxonomic scope" value="Bacteria"/>
</dbReference>
<dbReference type="HOGENOM" id="CLU_100590_3_0_5"/>
<dbReference type="OrthoDB" id="9807878at2"/>
<dbReference type="Proteomes" id="UP000001989">
    <property type="component" value="Chromosome"/>
</dbReference>
<dbReference type="GO" id="GO:0005737">
    <property type="term" value="C:cytoplasm"/>
    <property type="evidence" value="ECO:0007669"/>
    <property type="project" value="UniProtKB-ARBA"/>
</dbReference>
<dbReference type="GO" id="GO:0015935">
    <property type="term" value="C:small ribosomal subunit"/>
    <property type="evidence" value="ECO:0007669"/>
    <property type="project" value="TreeGrafter"/>
</dbReference>
<dbReference type="GO" id="GO:0003735">
    <property type="term" value="F:structural constituent of ribosome"/>
    <property type="evidence" value="ECO:0007669"/>
    <property type="project" value="InterPro"/>
</dbReference>
<dbReference type="GO" id="GO:0006412">
    <property type="term" value="P:translation"/>
    <property type="evidence" value="ECO:0007669"/>
    <property type="project" value="UniProtKB-UniRule"/>
</dbReference>
<dbReference type="Gene3D" id="3.30.1320.10">
    <property type="match status" value="1"/>
</dbReference>
<dbReference type="HAMAP" id="MF_00385">
    <property type="entry name" value="Ribosomal_bS16"/>
    <property type="match status" value="1"/>
</dbReference>
<dbReference type="InterPro" id="IPR000307">
    <property type="entry name" value="Ribosomal_bS16"/>
</dbReference>
<dbReference type="InterPro" id="IPR020592">
    <property type="entry name" value="Ribosomal_bS16_CS"/>
</dbReference>
<dbReference type="InterPro" id="IPR023803">
    <property type="entry name" value="Ribosomal_bS16_dom_sf"/>
</dbReference>
<dbReference type="NCBIfam" id="TIGR00002">
    <property type="entry name" value="S16"/>
    <property type="match status" value="1"/>
</dbReference>
<dbReference type="PANTHER" id="PTHR12919">
    <property type="entry name" value="30S RIBOSOMAL PROTEIN S16"/>
    <property type="match status" value="1"/>
</dbReference>
<dbReference type="PANTHER" id="PTHR12919:SF20">
    <property type="entry name" value="SMALL RIBOSOMAL SUBUNIT PROTEIN BS16M"/>
    <property type="match status" value="1"/>
</dbReference>
<dbReference type="Pfam" id="PF00886">
    <property type="entry name" value="Ribosomal_S16"/>
    <property type="match status" value="1"/>
</dbReference>
<dbReference type="SUPFAM" id="SSF54565">
    <property type="entry name" value="Ribosomal protein S16"/>
    <property type="match status" value="1"/>
</dbReference>
<dbReference type="PROSITE" id="PS00732">
    <property type="entry name" value="RIBOSOMAL_S16"/>
    <property type="match status" value="1"/>
</dbReference>
<proteinExistence type="inferred from homology"/>
<protein>
    <recommendedName>
        <fullName evidence="1">Small ribosomal subunit protein bS16</fullName>
    </recommendedName>
    <alternativeName>
        <fullName evidence="3">30S ribosomal protein S16</fullName>
    </alternativeName>
</protein>
<comment type="similarity">
    <text evidence="1">Belongs to the bacterial ribosomal protein bS16 family.</text>
</comment>